<comment type="alternative products">
    <event type="alternative splicing"/>
    <isoform>
        <id>P34531-1</id>
        <name>a</name>
        <sequence type="displayed"/>
    </isoform>
    <isoform>
        <id>P34531-2</id>
        <name>b</name>
        <sequence type="described" ref="VSP_016341"/>
    </isoform>
</comment>
<protein>
    <recommendedName>
        <fullName evidence="5">CAP-Gly domain-containing linker protein 1 homolog</fullName>
    </recommendedName>
</protein>
<accession>P34531</accession>
<accession>P34532</accession>
<accession>P34533</accession>
<accession>Q65ZC5</accession>
<keyword id="KW-0025">Alternative splicing</keyword>
<keyword id="KW-0175">Coiled coil</keyword>
<keyword id="KW-1185">Reference proteome</keyword>
<gene>
    <name evidence="5" type="primary">clip-1</name>
    <name evidence="5" type="ORF">M01A8.2</name>
</gene>
<feature type="chain" id="PRO_0000083545" description="CAP-Gly domain-containing linker protein 1 homolog">
    <location>
        <begin position="1"/>
        <end position="937"/>
    </location>
</feature>
<feature type="domain" description="CAP-Gly" evidence="2">
    <location>
        <begin position="39"/>
        <end position="81"/>
    </location>
</feature>
<feature type="region of interest" description="Disordered" evidence="3">
    <location>
        <begin position="90"/>
        <end position="131"/>
    </location>
</feature>
<feature type="region of interest" description="Disordered" evidence="3">
    <location>
        <begin position="264"/>
        <end position="548"/>
    </location>
</feature>
<feature type="region of interest" description="Disordered" evidence="3">
    <location>
        <begin position="819"/>
        <end position="866"/>
    </location>
</feature>
<feature type="region of interest" description="Disordered" evidence="3">
    <location>
        <begin position="916"/>
        <end position="937"/>
    </location>
</feature>
<feature type="coiled-coil region" evidence="1">
    <location>
        <begin position="566"/>
        <end position="740"/>
    </location>
</feature>
<feature type="coiled-coil region" evidence="1">
    <location>
        <begin position="773"/>
        <end position="800"/>
    </location>
</feature>
<feature type="compositionally biased region" description="Polar residues" evidence="3">
    <location>
        <begin position="268"/>
        <end position="281"/>
    </location>
</feature>
<feature type="compositionally biased region" description="Basic and acidic residues" evidence="3">
    <location>
        <begin position="285"/>
        <end position="295"/>
    </location>
</feature>
<feature type="compositionally biased region" description="Polar residues" evidence="3">
    <location>
        <begin position="296"/>
        <end position="309"/>
    </location>
</feature>
<feature type="compositionally biased region" description="Basic and acidic residues" evidence="3">
    <location>
        <begin position="317"/>
        <end position="353"/>
    </location>
</feature>
<feature type="compositionally biased region" description="Basic and acidic residues" evidence="3">
    <location>
        <begin position="383"/>
        <end position="396"/>
    </location>
</feature>
<feature type="compositionally biased region" description="Basic and acidic residues" evidence="3">
    <location>
        <begin position="409"/>
        <end position="424"/>
    </location>
</feature>
<feature type="compositionally biased region" description="Basic and acidic residues" evidence="3">
    <location>
        <begin position="463"/>
        <end position="473"/>
    </location>
</feature>
<feature type="compositionally biased region" description="Low complexity" evidence="3">
    <location>
        <begin position="492"/>
        <end position="501"/>
    </location>
</feature>
<feature type="compositionally biased region" description="Low complexity" evidence="3">
    <location>
        <begin position="832"/>
        <end position="844"/>
    </location>
</feature>
<feature type="compositionally biased region" description="Polar residues" evidence="3">
    <location>
        <begin position="845"/>
        <end position="858"/>
    </location>
</feature>
<feature type="splice variant" id="VSP_016341" description="In isoform b." evidence="4">
    <location>
        <begin position="103"/>
        <end position="170"/>
    </location>
</feature>
<sequence>MNKSHLGTADNPQEVVTAHDIGRLVDVVNVGKGFLRYVGPIHGKDGMFCGIELLEPNGKHDGTFQGVSYFIATPYHGIFAPIFRVTLDAEELPKPPPPNPSNRLSRSALPALQLRNPLTQERKPEEDVMSTSVYVSSSTKPIAIPTKQCRPPETDPMQMSMFSDMMDGSMFSNGSWSDIADSMITSNCTFTVRKGLPIDDDGDLMSVPMVQSVFNIDREALRREEQLQSSIVLGESRIGVEHLPIIEDENELETPLVETRTMPLPNDLNANFSNKNSTTTFVEPETPKVEIRENGNLDNSIETPPQQSPSGSSMVSHESDSSSKKDDTKSDKSPTKKSQKMEEKPVVKKKEEPAAPPPPPKFPVKQKAPSKHQLMMEQLKASIEAEKTKPKKEIKSRVSLLPPPAPKAPQKENKEGGEMTETPRRTITKTPLKTVNAKAKTSPTPPVERQKKERKPLYVAPPAKERVEKEKKIPSKPVVSPPTTAEKKPVVSSIPSTSSASKGPFPTSSFAGGKLQGPRKTSSSSTTTSAKKQKNPPIDEKEKLSRLQHSTHAFEATLIVMNRINEDNERKLGNISEQYEKKVSELGDLKKMLDEARKKFEEDVEQMKNSNQQVIRNHANAVESLQKTHETQIAEKNKEFERNFEEERARREAEVCAMNNRHQKVVACLDEKISEAEKQCEQLNVDKKVLQAALANDCDHRNQMLTKEISSLQTALEMKSAEMKELRQKNQNLSLQVDEIPLKELEISKWKHKSNEYKQMLDQKINGEKILVQQIEDLRRKQIHDEEEKEAMKRSFDLMQFKYENGDDPNVTSVMSAPMESRFSTPTKVQFRSRSSASGSRPISMATSNGGDQRLSTSSHHDDSMNRSTISMYTSHIRLPENHADDVIYAPDEIISSRSGSISQRLAISIENDGEPTIKSESSRIGNTSDSGIGLVM</sequence>
<reference key="1">
    <citation type="journal article" date="1994" name="Nature">
        <title>2.2 Mb of contiguous nucleotide sequence from chromosome III of C. elegans.</title>
        <authorList>
            <person name="Wilson R."/>
            <person name="Ainscough R."/>
            <person name="Anderson K."/>
            <person name="Baynes C."/>
            <person name="Berks M."/>
            <person name="Bonfield J."/>
            <person name="Burton J."/>
            <person name="Connell M."/>
            <person name="Copsey T."/>
            <person name="Cooper J."/>
            <person name="Coulson A."/>
            <person name="Craxton M."/>
            <person name="Dear S."/>
            <person name="Du Z."/>
            <person name="Durbin R."/>
            <person name="Favello A."/>
            <person name="Fraser A."/>
            <person name="Fulton L."/>
            <person name="Gardner A."/>
            <person name="Green P."/>
            <person name="Hawkins T."/>
            <person name="Hillier L."/>
            <person name="Jier M."/>
            <person name="Johnston L."/>
            <person name="Jones M."/>
            <person name="Kershaw J."/>
            <person name="Kirsten J."/>
            <person name="Laisster N."/>
            <person name="Latreille P."/>
            <person name="Lightning J."/>
            <person name="Lloyd C."/>
            <person name="Mortimore B."/>
            <person name="O'Callaghan M."/>
            <person name="Parsons J."/>
            <person name="Percy C."/>
            <person name="Rifken L."/>
            <person name="Roopra A."/>
            <person name="Saunders D."/>
            <person name="Shownkeen R."/>
            <person name="Sims M."/>
            <person name="Smaldon N."/>
            <person name="Smith A."/>
            <person name="Smith M."/>
            <person name="Sonnhammer E."/>
            <person name="Staden R."/>
            <person name="Sulston J."/>
            <person name="Thierry-Mieg J."/>
            <person name="Thomas K."/>
            <person name="Vaudin M."/>
            <person name="Vaughan K."/>
            <person name="Waterston R."/>
            <person name="Watson A."/>
            <person name="Weinstock L."/>
            <person name="Wilkinson-Sproat J."/>
            <person name="Wohldman P."/>
        </authorList>
    </citation>
    <scope>NUCLEOTIDE SEQUENCE [LARGE SCALE GENOMIC DNA]</scope>
    <source>
        <strain>Bristol N2</strain>
    </source>
</reference>
<reference key="2">
    <citation type="journal article" date="1998" name="Science">
        <title>Genome sequence of the nematode C. elegans: a platform for investigating biology.</title>
        <authorList>
            <consortium name="The C. elegans sequencing consortium"/>
        </authorList>
    </citation>
    <scope>NUCLEOTIDE SEQUENCE [LARGE SCALE GENOMIC DNA]</scope>
    <scope>ALTERNATIVE SPLICING</scope>
    <source>
        <strain>Bristol N2</strain>
    </source>
</reference>
<organism>
    <name type="scientific">Caenorhabditis elegans</name>
    <dbReference type="NCBI Taxonomy" id="6239"/>
    <lineage>
        <taxon>Eukaryota</taxon>
        <taxon>Metazoa</taxon>
        <taxon>Ecdysozoa</taxon>
        <taxon>Nematoda</taxon>
        <taxon>Chromadorea</taxon>
        <taxon>Rhabditida</taxon>
        <taxon>Rhabditina</taxon>
        <taxon>Rhabditomorpha</taxon>
        <taxon>Rhabditoidea</taxon>
        <taxon>Rhabditidae</taxon>
        <taxon>Peloderinae</taxon>
        <taxon>Caenorhabditis</taxon>
    </lineage>
</organism>
<name>CLP1H_CAEEL</name>
<dbReference type="EMBL" id="Z27081">
    <property type="protein sequence ID" value="CAA81607.2"/>
    <property type="molecule type" value="Genomic_DNA"/>
</dbReference>
<dbReference type="EMBL" id="Z27081">
    <property type="protein sequence ID" value="CAH19085.1"/>
    <property type="molecule type" value="Genomic_DNA"/>
</dbReference>
<dbReference type="PIR" id="G88551">
    <property type="entry name" value="G88551"/>
</dbReference>
<dbReference type="PIR" id="S40998">
    <property type="entry name" value="S40998"/>
</dbReference>
<dbReference type="PIR" id="S40999">
    <property type="entry name" value="S40999"/>
</dbReference>
<dbReference type="RefSeq" id="NP_001022682.1">
    <molecule id="P34531-1"/>
    <property type="nucleotide sequence ID" value="NM_001027511.6"/>
</dbReference>
<dbReference type="RefSeq" id="NP_001022683.1">
    <molecule id="P34531-2"/>
    <property type="nucleotide sequence ID" value="NM_001027512.7"/>
</dbReference>
<dbReference type="SMR" id="P34531"/>
<dbReference type="BioGRID" id="41505">
    <property type="interactions" value="1"/>
</dbReference>
<dbReference type="FunCoup" id="P34531">
    <property type="interactions" value="1"/>
</dbReference>
<dbReference type="STRING" id="6239.M01A8.2a.1"/>
<dbReference type="iPTMnet" id="P34531"/>
<dbReference type="PaxDb" id="6239-M01A8.2a"/>
<dbReference type="PeptideAtlas" id="P34531"/>
<dbReference type="EnsemblMetazoa" id="M01A8.2a.1">
    <molecule id="P34531-1"/>
    <property type="protein sequence ID" value="M01A8.2a.1"/>
    <property type="gene ID" value="WBGene00010796"/>
</dbReference>
<dbReference type="EnsemblMetazoa" id="M01A8.2b.1">
    <molecule id="P34531-2"/>
    <property type="protein sequence ID" value="M01A8.2b.1"/>
    <property type="gene ID" value="WBGene00010796"/>
</dbReference>
<dbReference type="GeneID" id="176307"/>
<dbReference type="KEGG" id="cel:CELE_M01A8.2"/>
<dbReference type="UCSC" id="M01A8.2b">
    <molecule id="P34531-1"/>
    <property type="organism name" value="c. elegans"/>
</dbReference>
<dbReference type="AGR" id="WB:WBGene00010796"/>
<dbReference type="CTD" id="176307"/>
<dbReference type="WormBase" id="M01A8.2a">
    <molecule id="P34531-1"/>
    <property type="protein sequence ID" value="CE33535"/>
    <property type="gene ID" value="WBGene00010796"/>
    <property type="gene designation" value="clip-1"/>
</dbReference>
<dbReference type="WormBase" id="M01A8.2b">
    <molecule id="P34531-2"/>
    <property type="protein sequence ID" value="CE37262"/>
    <property type="gene ID" value="WBGene00010796"/>
    <property type="gene designation" value="clip-1"/>
</dbReference>
<dbReference type="eggNOG" id="KOG4568">
    <property type="taxonomic scope" value="Eukaryota"/>
</dbReference>
<dbReference type="HOGENOM" id="CLU_296349_0_0_1"/>
<dbReference type="InParanoid" id="P34531"/>
<dbReference type="OMA" id="MSVPMVQ"/>
<dbReference type="OrthoDB" id="2130750at2759"/>
<dbReference type="PRO" id="PR:P34531"/>
<dbReference type="Proteomes" id="UP000001940">
    <property type="component" value="Chromosome III"/>
</dbReference>
<dbReference type="Bgee" id="WBGene00010796">
    <property type="expression patterns" value="Expressed in larva and 3 other cell types or tissues"/>
</dbReference>
<dbReference type="GO" id="GO:0005635">
    <property type="term" value="C:nuclear envelope"/>
    <property type="evidence" value="ECO:0000314"/>
    <property type="project" value="WormBase"/>
</dbReference>
<dbReference type="GO" id="GO:0008017">
    <property type="term" value="F:microtubule binding"/>
    <property type="evidence" value="ECO:0000314"/>
    <property type="project" value="WormBase"/>
</dbReference>
<dbReference type="GO" id="GO:0051647">
    <property type="term" value="P:nucleus localization"/>
    <property type="evidence" value="ECO:0000315"/>
    <property type="project" value="WormBase"/>
</dbReference>
<dbReference type="GO" id="GO:0006997">
    <property type="term" value="P:nucleus organization"/>
    <property type="evidence" value="ECO:0000315"/>
    <property type="project" value="WormBase"/>
</dbReference>
<dbReference type="FunFam" id="2.30.30.190:FF:000024">
    <property type="entry name" value="CAP-Gly domain-containing linker protein 1 homolog"/>
    <property type="match status" value="1"/>
</dbReference>
<dbReference type="Gene3D" id="2.30.30.190">
    <property type="entry name" value="CAP Gly-rich-like domain"/>
    <property type="match status" value="1"/>
</dbReference>
<dbReference type="InterPro" id="IPR036859">
    <property type="entry name" value="CAP-Gly_dom_sf"/>
</dbReference>
<dbReference type="InterPro" id="IPR000938">
    <property type="entry name" value="CAP-Gly_domain"/>
</dbReference>
<dbReference type="Pfam" id="PF01302">
    <property type="entry name" value="CAP_GLY"/>
    <property type="match status" value="1"/>
</dbReference>
<dbReference type="SMART" id="SM01052">
    <property type="entry name" value="CAP_GLY"/>
    <property type="match status" value="1"/>
</dbReference>
<dbReference type="SUPFAM" id="SSF74924">
    <property type="entry name" value="Cap-Gly domain"/>
    <property type="match status" value="1"/>
</dbReference>
<dbReference type="PROSITE" id="PS00845">
    <property type="entry name" value="CAP_GLY_1"/>
    <property type="match status" value="1"/>
</dbReference>
<dbReference type="PROSITE" id="PS50245">
    <property type="entry name" value="CAP_GLY_2"/>
    <property type="match status" value="1"/>
</dbReference>
<proteinExistence type="predicted"/>
<evidence type="ECO:0000255" key="1"/>
<evidence type="ECO:0000255" key="2">
    <source>
        <dbReference type="PROSITE-ProRule" id="PRU00045"/>
    </source>
</evidence>
<evidence type="ECO:0000256" key="3">
    <source>
        <dbReference type="SAM" id="MobiDB-lite"/>
    </source>
</evidence>
<evidence type="ECO:0000305" key="4"/>
<evidence type="ECO:0000312" key="5">
    <source>
        <dbReference type="WormBase" id="M01A8.2a"/>
    </source>
</evidence>